<protein>
    <recommendedName>
        <fullName>Ganglioside-induced differentiation-associated protein 2</fullName>
    </recommendedName>
</protein>
<gene>
    <name type="primary">Gdap2</name>
</gene>
<organism>
    <name type="scientific">Mus musculus</name>
    <name type="common">Mouse</name>
    <dbReference type="NCBI Taxonomy" id="10090"/>
    <lineage>
        <taxon>Eukaryota</taxon>
        <taxon>Metazoa</taxon>
        <taxon>Chordata</taxon>
        <taxon>Craniata</taxon>
        <taxon>Vertebrata</taxon>
        <taxon>Euteleostomi</taxon>
        <taxon>Mammalia</taxon>
        <taxon>Eutheria</taxon>
        <taxon>Euarchontoglires</taxon>
        <taxon>Glires</taxon>
        <taxon>Rodentia</taxon>
        <taxon>Myomorpha</taxon>
        <taxon>Muroidea</taxon>
        <taxon>Muridae</taxon>
        <taxon>Murinae</taxon>
        <taxon>Mus</taxon>
        <taxon>Mus</taxon>
    </lineage>
</organism>
<keyword id="KW-0025">Alternative splicing</keyword>
<keyword id="KW-0597">Phosphoprotein</keyword>
<keyword id="KW-1185">Reference proteome</keyword>
<evidence type="ECO:0000250" key="1">
    <source>
        <dbReference type="UniProtKB" id="Q9NXN4"/>
    </source>
</evidence>
<evidence type="ECO:0000255" key="2">
    <source>
        <dbReference type="PROSITE-ProRule" id="PRU00490"/>
    </source>
</evidence>
<evidence type="ECO:0000256" key="3">
    <source>
        <dbReference type="SAM" id="MobiDB-lite"/>
    </source>
</evidence>
<evidence type="ECO:0000269" key="4">
    <source>
    </source>
</evidence>
<evidence type="ECO:0000303" key="5">
    <source>
    </source>
</evidence>
<evidence type="ECO:0000305" key="6"/>
<accession>Q9DBL2</accession>
<accession>O88742</accession>
<accession>Q8C468</accession>
<dbReference type="EMBL" id="Y17851">
    <property type="protein sequence ID" value="CAA76894.1"/>
    <property type="status" value="ALT_SEQ"/>
    <property type="molecule type" value="mRNA"/>
</dbReference>
<dbReference type="EMBL" id="AK004887">
    <property type="protein sequence ID" value="BAB23645.1"/>
    <property type="molecule type" value="mRNA"/>
</dbReference>
<dbReference type="EMBL" id="AK082958">
    <property type="protein sequence ID" value="BAC38709.1"/>
    <property type="molecule type" value="mRNA"/>
</dbReference>
<dbReference type="EMBL" id="AK146835">
    <property type="protein sequence ID" value="BAE27470.1"/>
    <property type="molecule type" value="mRNA"/>
</dbReference>
<dbReference type="EMBL" id="AK166799">
    <property type="protein sequence ID" value="BAE39027.1"/>
    <property type="molecule type" value="mRNA"/>
</dbReference>
<dbReference type="EMBL" id="AK166859">
    <property type="protein sequence ID" value="BAE39075.1"/>
    <property type="molecule type" value="mRNA"/>
</dbReference>
<dbReference type="EMBL" id="AC102209">
    <property type="status" value="NOT_ANNOTATED_CDS"/>
    <property type="molecule type" value="Genomic_DNA"/>
</dbReference>
<dbReference type="EMBL" id="AL606742">
    <property type="status" value="NOT_ANNOTATED_CDS"/>
    <property type="molecule type" value="Genomic_DNA"/>
</dbReference>
<dbReference type="EMBL" id="BC025070">
    <property type="protein sequence ID" value="AAH25070.1"/>
    <property type="molecule type" value="mRNA"/>
</dbReference>
<dbReference type="CCDS" id="CCDS17675.1">
    <molecule id="Q9DBL2-1"/>
</dbReference>
<dbReference type="RefSeq" id="NP_001397040.1">
    <molecule id="Q9DBL2-1"/>
    <property type="nucleotide sequence ID" value="NM_001410111.1"/>
</dbReference>
<dbReference type="RefSeq" id="NP_034399.1">
    <molecule id="Q9DBL2-1"/>
    <property type="nucleotide sequence ID" value="NM_010269.4"/>
</dbReference>
<dbReference type="RefSeq" id="XP_006501064.1">
    <property type="nucleotide sequence ID" value="XM_006501001.2"/>
</dbReference>
<dbReference type="SMR" id="Q9DBL2"/>
<dbReference type="FunCoup" id="Q9DBL2">
    <property type="interactions" value="3285"/>
</dbReference>
<dbReference type="STRING" id="10090.ENSMUSP00000029459"/>
<dbReference type="iPTMnet" id="Q9DBL2"/>
<dbReference type="PhosphoSitePlus" id="Q9DBL2"/>
<dbReference type="jPOST" id="Q9DBL2"/>
<dbReference type="PaxDb" id="10090-ENSMUSP00000029459"/>
<dbReference type="PeptideAtlas" id="Q9DBL2"/>
<dbReference type="ProteomicsDB" id="273035">
    <molecule id="Q9DBL2-1"/>
</dbReference>
<dbReference type="ProteomicsDB" id="273036">
    <molecule id="Q9DBL2-2"/>
</dbReference>
<dbReference type="Pumba" id="Q9DBL2"/>
<dbReference type="Antibodypedia" id="46950">
    <property type="antibodies" value="110 antibodies from 20 providers"/>
</dbReference>
<dbReference type="DNASU" id="14547"/>
<dbReference type="Ensembl" id="ENSMUST00000029459.10">
    <molecule id="Q9DBL2-1"/>
    <property type="protein sequence ID" value="ENSMUSP00000029459.4"/>
    <property type="gene ID" value="ENSMUSG00000027865.11"/>
</dbReference>
<dbReference type="Ensembl" id="ENSMUST00000106997.2">
    <molecule id="Q9DBL2-2"/>
    <property type="protein sequence ID" value="ENSMUSP00000102610.2"/>
    <property type="gene ID" value="ENSMUSG00000027865.11"/>
</dbReference>
<dbReference type="GeneID" id="14547"/>
<dbReference type="KEGG" id="mmu:14547"/>
<dbReference type="UCSC" id="uc008qqq.2">
    <molecule id="Q9DBL2-2"/>
    <property type="organism name" value="mouse"/>
</dbReference>
<dbReference type="UCSC" id="uc008qqr.2">
    <molecule id="Q9DBL2-1"/>
    <property type="organism name" value="mouse"/>
</dbReference>
<dbReference type="AGR" id="MGI:1338001"/>
<dbReference type="CTD" id="54834"/>
<dbReference type="MGI" id="MGI:1338001">
    <property type="gene designation" value="Gdap2"/>
</dbReference>
<dbReference type="VEuPathDB" id="HostDB:ENSMUSG00000027865"/>
<dbReference type="eggNOG" id="KOG2633">
    <property type="taxonomic scope" value="Eukaryota"/>
</dbReference>
<dbReference type="GeneTree" id="ENSGT00940000156336"/>
<dbReference type="HOGENOM" id="CLU_026877_0_0_1"/>
<dbReference type="InParanoid" id="Q9DBL2"/>
<dbReference type="OMA" id="IHPTFWT"/>
<dbReference type="OrthoDB" id="21872at9989"/>
<dbReference type="PhylomeDB" id="Q9DBL2"/>
<dbReference type="TreeFam" id="TF324164"/>
<dbReference type="BioGRID-ORCS" id="14547">
    <property type="hits" value="3 hits in 78 CRISPR screens"/>
</dbReference>
<dbReference type="ChiTaRS" id="Gdap2">
    <property type="organism name" value="mouse"/>
</dbReference>
<dbReference type="PRO" id="PR:Q9DBL2"/>
<dbReference type="Proteomes" id="UP000000589">
    <property type="component" value="Chromosome 3"/>
</dbReference>
<dbReference type="RNAct" id="Q9DBL2">
    <property type="molecule type" value="protein"/>
</dbReference>
<dbReference type="Bgee" id="ENSMUSG00000027865">
    <property type="expression patterns" value="Expressed in cleaving embryo and 272 other cell types or tissues"/>
</dbReference>
<dbReference type="ExpressionAtlas" id="Q9DBL2">
    <property type="expression patterns" value="baseline and differential"/>
</dbReference>
<dbReference type="GO" id="GO:0032526">
    <property type="term" value="P:response to retinoic acid"/>
    <property type="evidence" value="ECO:0000314"/>
    <property type="project" value="MGI"/>
</dbReference>
<dbReference type="CDD" id="cd02905">
    <property type="entry name" value="Macro_GDAP2-like"/>
    <property type="match status" value="1"/>
</dbReference>
<dbReference type="CDD" id="cd00170">
    <property type="entry name" value="SEC14"/>
    <property type="match status" value="1"/>
</dbReference>
<dbReference type="FunFam" id="3.40.525.10:FF:000014">
    <property type="entry name" value="Ganglioside-induced differentiation-associated protein 2"/>
    <property type="match status" value="1"/>
</dbReference>
<dbReference type="FunFam" id="3.40.220.10:FF:000006">
    <property type="entry name" value="ganglioside-induced differentiation-associated protein 2 isoform X1"/>
    <property type="match status" value="1"/>
</dbReference>
<dbReference type="Gene3D" id="3.40.525.10">
    <property type="entry name" value="CRAL-TRIO lipid binding domain"/>
    <property type="match status" value="1"/>
</dbReference>
<dbReference type="Gene3D" id="3.40.220.10">
    <property type="entry name" value="Leucine Aminopeptidase, subunit E, domain 1"/>
    <property type="match status" value="1"/>
</dbReference>
<dbReference type="InterPro" id="IPR001251">
    <property type="entry name" value="CRAL-TRIO_dom"/>
</dbReference>
<dbReference type="InterPro" id="IPR036865">
    <property type="entry name" value="CRAL-TRIO_dom_sf"/>
</dbReference>
<dbReference type="InterPro" id="IPR002589">
    <property type="entry name" value="Macro_dom"/>
</dbReference>
<dbReference type="InterPro" id="IPR043472">
    <property type="entry name" value="Macro_dom-like"/>
</dbReference>
<dbReference type="InterPro" id="IPR035793">
    <property type="entry name" value="Macro_GDAP2"/>
</dbReference>
<dbReference type="PANTHER" id="PTHR11106">
    <property type="entry name" value="GANGLIOSIDE INDUCED DIFFERENTIATION ASSOCIATED PROTEIN 2-RELATED"/>
    <property type="match status" value="1"/>
</dbReference>
<dbReference type="PANTHER" id="PTHR11106:SF72">
    <property type="entry name" value="GANGLIOSIDE-INDUCED DIFFERENTIATION-ASSOCIATED PROTEIN 2"/>
    <property type="match status" value="1"/>
</dbReference>
<dbReference type="Pfam" id="PF13716">
    <property type="entry name" value="CRAL_TRIO_2"/>
    <property type="match status" value="1"/>
</dbReference>
<dbReference type="Pfam" id="PF01661">
    <property type="entry name" value="Macro"/>
    <property type="match status" value="1"/>
</dbReference>
<dbReference type="SMART" id="SM00506">
    <property type="entry name" value="A1pp"/>
    <property type="match status" value="1"/>
</dbReference>
<dbReference type="SMART" id="SM00516">
    <property type="entry name" value="SEC14"/>
    <property type="match status" value="1"/>
</dbReference>
<dbReference type="SUPFAM" id="SSF52087">
    <property type="entry name" value="CRAL/TRIO domain"/>
    <property type="match status" value="1"/>
</dbReference>
<dbReference type="SUPFAM" id="SSF52949">
    <property type="entry name" value="Macro domain-like"/>
    <property type="match status" value="1"/>
</dbReference>
<dbReference type="PROSITE" id="PS51154">
    <property type="entry name" value="MACRO"/>
    <property type="match status" value="1"/>
</dbReference>
<reference key="1">
    <citation type="journal article" date="1999" name="J. Neurochem.">
        <title>Isolation of 10 differentially expressed cDNAs in differentiated Neuro2a cells induced through controlled expression of the GD3 synthase gene.</title>
        <authorList>
            <person name="Liu H."/>
            <person name="Nakagawa T."/>
            <person name="Kanematsu T."/>
            <person name="Uchida T."/>
            <person name="Tsuji S."/>
        </authorList>
    </citation>
    <scope>NUCLEOTIDE SEQUENCE [MRNA]</scope>
    <scope>INDUCTION</scope>
    <scope>DEVELOPMENTAL STAGE</scope>
    <scope>TISSUE SPECIFICITY</scope>
    <source>
        <strain>ICR</strain>
        <tissue>Brain</tissue>
    </source>
</reference>
<reference key="2">
    <citation type="journal article" date="2005" name="Science">
        <title>The transcriptional landscape of the mammalian genome.</title>
        <authorList>
            <person name="Carninci P."/>
            <person name="Kasukawa T."/>
            <person name="Katayama S."/>
            <person name="Gough J."/>
            <person name="Frith M.C."/>
            <person name="Maeda N."/>
            <person name="Oyama R."/>
            <person name="Ravasi T."/>
            <person name="Lenhard B."/>
            <person name="Wells C."/>
            <person name="Kodzius R."/>
            <person name="Shimokawa K."/>
            <person name="Bajic V.B."/>
            <person name="Brenner S.E."/>
            <person name="Batalov S."/>
            <person name="Forrest A.R."/>
            <person name="Zavolan M."/>
            <person name="Davis M.J."/>
            <person name="Wilming L.G."/>
            <person name="Aidinis V."/>
            <person name="Allen J.E."/>
            <person name="Ambesi-Impiombato A."/>
            <person name="Apweiler R."/>
            <person name="Aturaliya R.N."/>
            <person name="Bailey T.L."/>
            <person name="Bansal M."/>
            <person name="Baxter L."/>
            <person name="Beisel K.W."/>
            <person name="Bersano T."/>
            <person name="Bono H."/>
            <person name="Chalk A.M."/>
            <person name="Chiu K.P."/>
            <person name="Choudhary V."/>
            <person name="Christoffels A."/>
            <person name="Clutterbuck D.R."/>
            <person name="Crowe M.L."/>
            <person name="Dalla E."/>
            <person name="Dalrymple B.P."/>
            <person name="de Bono B."/>
            <person name="Della Gatta G."/>
            <person name="di Bernardo D."/>
            <person name="Down T."/>
            <person name="Engstrom P."/>
            <person name="Fagiolini M."/>
            <person name="Faulkner G."/>
            <person name="Fletcher C.F."/>
            <person name="Fukushima T."/>
            <person name="Furuno M."/>
            <person name="Futaki S."/>
            <person name="Gariboldi M."/>
            <person name="Georgii-Hemming P."/>
            <person name="Gingeras T.R."/>
            <person name="Gojobori T."/>
            <person name="Green R.E."/>
            <person name="Gustincich S."/>
            <person name="Harbers M."/>
            <person name="Hayashi Y."/>
            <person name="Hensch T.K."/>
            <person name="Hirokawa N."/>
            <person name="Hill D."/>
            <person name="Huminiecki L."/>
            <person name="Iacono M."/>
            <person name="Ikeo K."/>
            <person name="Iwama A."/>
            <person name="Ishikawa T."/>
            <person name="Jakt M."/>
            <person name="Kanapin A."/>
            <person name="Katoh M."/>
            <person name="Kawasawa Y."/>
            <person name="Kelso J."/>
            <person name="Kitamura H."/>
            <person name="Kitano H."/>
            <person name="Kollias G."/>
            <person name="Krishnan S.P."/>
            <person name="Kruger A."/>
            <person name="Kummerfeld S.K."/>
            <person name="Kurochkin I.V."/>
            <person name="Lareau L.F."/>
            <person name="Lazarevic D."/>
            <person name="Lipovich L."/>
            <person name="Liu J."/>
            <person name="Liuni S."/>
            <person name="McWilliam S."/>
            <person name="Madan Babu M."/>
            <person name="Madera M."/>
            <person name="Marchionni L."/>
            <person name="Matsuda H."/>
            <person name="Matsuzawa S."/>
            <person name="Miki H."/>
            <person name="Mignone F."/>
            <person name="Miyake S."/>
            <person name="Morris K."/>
            <person name="Mottagui-Tabar S."/>
            <person name="Mulder N."/>
            <person name="Nakano N."/>
            <person name="Nakauchi H."/>
            <person name="Ng P."/>
            <person name="Nilsson R."/>
            <person name="Nishiguchi S."/>
            <person name="Nishikawa S."/>
            <person name="Nori F."/>
            <person name="Ohara O."/>
            <person name="Okazaki Y."/>
            <person name="Orlando V."/>
            <person name="Pang K.C."/>
            <person name="Pavan W.J."/>
            <person name="Pavesi G."/>
            <person name="Pesole G."/>
            <person name="Petrovsky N."/>
            <person name="Piazza S."/>
            <person name="Reed J."/>
            <person name="Reid J.F."/>
            <person name="Ring B.Z."/>
            <person name="Ringwald M."/>
            <person name="Rost B."/>
            <person name="Ruan Y."/>
            <person name="Salzberg S.L."/>
            <person name="Sandelin A."/>
            <person name="Schneider C."/>
            <person name="Schoenbach C."/>
            <person name="Sekiguchi K."/>
            <person name="Semple C.A."/>
            <person name="Seno S."/>
            <person name="Sessa L."/>
            <person name="Sheng Y."/>
            <person name="Shibata Y."/>
            <person name="Shimada H."/>
            <person name="Shimada K."/>
            <person name="Silva D."/>
            <person name="Sinclair B."/>
            <person name="Sperling S."/>
            <person name="Stupka E."/>
            <person name="Sugiura K."/>
            <person name="Sultana R."/>
            <person name="Takenaka Y."/>
            <person name="Taki K."/>
            <person name="Tammoja K."/>
            <person name="Tan S.L."/>
            <person name="Tang S."/>
            <person name="Taylor M.S."/>
            <person name="Tegner J."/>
            <person name="Teichmann S.A."/>
            <person name="Ueda H.R."/>
            <person name="van Nimwegen E."/>
            <person name="Verardo R."/>
            <person name="Wei C.L."/>
            <person name="Yagi K."/>
            <person name="Yamanishi H."/>
            <person name="Zabarovsky E."/>
            <person name="Zhu S."/>
            <person name="Zimmer A."/>
            <person name="Hide W."/>
            <person name="Bult C."/>
            <person name="Grimmond S.M."/>
            <person name="Teasdale R.D."/>
            <person name="Liu E.T."/>
            <person name="Brusic V."/>
            <person name="Quackenbush J."/>
            <person name="Wahlestedt C."/>
            <person name="Mattick J.S."/>
            <person name="Hume D.A."/>
            <person name="Kai C."/>
            <person name="Sasaki D."/>
            <person name="Tomaru Y."/>
            <person name="Fukuda S."/>
            <person name="Kanamori-Katayama M."/>
            <person name="Suzuki M."/>
            <person name="Aoki J."/>
            <person name="Arakawa T."/>
            <person name="Iida J."/>
            <person name="Imamura K."/>
            <person name="Itoh M."/>
            <person name="Kato T."/>
            <person name="Kawaji H."/>
            <person name="Kawagashira N."/>
            <person name="Kawashima T."/>
            <person name="Kojima M."/>
            <person name="Kondo S."/>
            <person name="Konno H."/>
            <person name="Nakano K."/>
            <person name="Ninomiya N."/>
            <person name="Nishio T."/>
            <person name="Okada M."/>
            <person name="Plessy C."/>
            <person name="Shibata K."/>
            <person name="Shiraki T."/>
            <person name="Suzuki S."/>
            <person name="Tagami M."/>
            <person name="Waki K."/>
            <person name="Watahiki A."/>
            <person name="Okamura-Oho Y."/>
            <person name="Suzuki H."/>
            <person name="Kawai J."/>
            <person name="Hayashizaki Y."/>
        </authorList>
    </citation>
    <scope>NUCLEOTIDE SEQUENCE [LARGE SCALE MRNA] (ISOFORMS 1 AND 2)</scope>
    <source>
        <strain>C57BL/6J</strain>
        <tissue>Amnion</tissue>
        <tissue>Liver</tissue>
        <tissue>Spinal cord</tissue>
    </source>
</reference>
<reference key="3">
    <citation type="journal article" date="2009" name="PLoS Biol.">
        <title>Lineage-specific biology revealed by a finished genome assembly of the mouse.</title>
        <authorList>
            <person name="Church D.M."/>
            <person name="Goodstadt L."/>
            <person name="Hillier L.W."/>
            <person name="Zody M.C."/>
            <person name="Goldstein S."/>
            <person name="She X."/>
            <person name="Bult C.J."/>
            <person name="Agarwala R."/>
            <person name="Cherry J.L."/>
            <person name="DiCuccio M."/>
            <person name="Hlavina W."/>
            <person name="Kapustin Y."/>
            <person name="Meric P."/>
            <person name="Maglott D."/>
            <person name="Birtle Z."/>
            <person name="Marques A.C."/>
            <person name="Graves T."/>
            <person name="Zhou S."/>
            <person name="Teague B."/>
            <person name="Potamousis K."/>
            <person name="Churas C."/>
            <person name="Place M."/>
            <person name="Herschleb J."/>
            <person name="Runnheim R."/>
            <person name="Forrest D."/>
            <person name="Amos-Landgraf J."/>
            <person name="Schwartz D.C."/>
            <person name="Cheng Z."/>
            <person name="Lindblad-Toh K."/>
            <person name="Eichler E.E."/>
            <person name="Ponting C.P."/>
        </authorList>
    </citation>
    <scope>NUCLEOTIDE SEQUENCE [LARGE SCALE GENOMIC DNA]</scope>
    <source>
        <strain>C57BL/6J</strain>
    </source>
</reference>
<reference key="4">
    <citation type="journal article" date="2004" name="Genome Res.">
        <title>The status, quality, and expansion of the NIH full-length cDNA project: the Mammalian Gene Collection (MGC).</title>
        <authorList>
            <consortium name="The MGC Project Team"/>
        </authorList>
    </citation>
    <scope>NUCLEOTIDE SEQUENCE [LARGE SCALE MRNA] (ISOFORM 1)</scope>
    <source>
        <strain>FVB/N</strain>
        <tissue>Mammary tumor</tissue>
    </source>
</reference>
<reference key="5">
    <citation type="journal article" date="2010" name="Cell">
        <title>A tissue-specific atlas of mouse protein phosphorylation and expression.</title>
        <authorList>
            <person name="Huttlin E.L."/>
            <person name="Jedrychowski M.P."/>
            <person name="Elias J.E."/>
            <person name="Goswami T."/>
            <person name="Rad R."/>
            <person name="Beausoleil S.A."/>
            <person name="Villen J."/>
            <person name="Haas W."/>
            <person name="Sowa M.E."/>
            <person name="Gygi S.P."/>
        </authorList>
    </citation>
    <scope>IDENTIFICATION BY MASS SPECTROMETRY [LARGE SCALE ANALYSIS]</scope>
    <source>
        <tissue>Spleen</tissue>
    </source>
</reference>
<proteinExistence type="evidence at protein level"/>
<comment type="alternative products">
    <event type="alternative splicing"/>
    <isoform>
        <id>Q9DBL2-1</id>
        <name>1</name>
        <sequence type="displayed"/>
    </isoform>
    <isoform>
        <id>Q9DBL2-2</id>
        <name>2</name>
        <sequence type="described" ref="VSP_033187"/>
    </isoform>
</comment>
<comment type="tissue specificity">
    <text evidence="4">Expressed at high levels in brain and testis, and at low levels in liver and kidney.</text>
</comment>
<comment type="developmental stage">
    <text evidence="4">In the brain, expression starts at 12 dpc and increases until adulthood.</text>
</comment>
<comment type="induction">
    <text evidence="4">By differentiation in neurons.</text>
</comment>
<comment type="similarity">
    <text evidence="6">Belongs to the GDAP2 family.</text>
</comment>
<comment type="sequence caution" evidence="6">
    <conflict type="erroneous translation">
        <sequence resource="EMBL-CDS" id="CAA76894"/>
    </conflict>
    <text>Wrong choice of frame.</text>
</comment>
<comment type="sequence caution" evidence="6">
    <conflict type="frameshift">
        <sequence resource="EMBL-CDS" id="CAA76894"/>
    </conflict>
</comment>
<feature type="chain" id="PRO_0000331396" description="Ganglioside-induced differentiation-associated protein 2">
    <location>
        <begin position="1"/>
        <end position="498"/>
    </location>
</feature>
<feature type="domain" description="Macro" evidence="2">
    <location>
        <begin position="43"/>
        <end position="223"/>
    </location>
</feature>
<feature type="domain" description="CRAL-TRIO">
    <location>
        <begin position="334"/>
        <end position="482"/>
    </location>
</feature>
<feature type="region of interest" description="Disordered" evidence="3">
    <location>
        <begin position="248"/>
        <end position="275"/>
    </location>
</feature>
<feature type="compositionally biased region" description="Basic and acidic residues" evidence="3">
    <location>
        <begin position="253"/>
        <end position="263"/>
    </location>
</feature>
<feature type="compositionally biased region" description="Acidic residues" evidence="3">
    <location>
        <begin position="265"/>
        <end position="275"/>
    </location>
</feature>
<feature type="modified residue" description="Phosphoserine" evidence="1">
    <location>
        <position position="281"/>
    </location>
</feature>
<feature type="splice variant" id="VSP_033187" description="In isoform 2." evidence="5">
    <original>ENGPYFASYPPSPDL</original>
    <variation>VSACPPLPGVVCRCAAAAGVSIWVCHGAAGVSLCVSCYMPTMKAASQSFCLITCRYTPVCSVC</variation>
    <location>
        <begin position="484"/>
        <end position="498"/>
    </location>
</feature>
<name>GDAP2_MOUSE</name>
<sequence length="498" mass="56269">MDPLGAPSQFVDVDTLLSWGDSYEDEVDCADSTAEAFQEDASRSPFVYSRDVNGKVVLWKGDVALLNCTAIVNTSNESLTDKNPVSESIFMLAGPDLKEDLQKLKGCRTGEAKLTKGFNLAARFIIHTVGPKYKSRYRTAAESSLYSCYRNVLQLAKEQSMSSVGFCVINSAKRGYPLEDATHIALRTVRRFLEIHGENIEKVVFAVSELEEATYQKLLPLYFPRSLKEEIRSLPYLPADIGNAEGEPVVPERQIRISEKPGASEDNEEEDEDEGLGVDLSFIGSHAFARMEGDIDKQRKLILQGQLSEAALQKQHQRNYNRWLCQARSEDLSDIASLKALYQTGVDNCGRTVMVVVGRNIPVTLIDMDKALLYFIHVMDHIAVKEYVLVYFHTLTSDYNHLDSDFLKKLYDVVDIKYKRNLKAVYFVHPTFRSKVSTWFFTTFSVSGLKDKIHHVDSLQQLFSAISPEQIDFPPFVLEYDARENGPYFASYPPSPDL</sequence>